<sequence>MPRSLKKGPFIDLHLLKKIEVAAEKNDRKPIKTWSRRSMILPQMVGLTIAVHNGRQHVPVLVNEDMVGHKLGEFAGTRNYRGHVADKKAKR</sequence>
<gene>
    <name evidence="1" type="primary">rpsS</name>
    <name type="ordered locus">Pfl01_5075</name>
</gene>
<proteinExistence type="inferred from homology"/>
<dbReference type="EMBL" id="CP000094">
    <property type="protein sequence ID" value="ABA76812.1"/>
    <property type="molecule type" value="Genomic_DNA"/>
</dbReference>
<dbReference type="RefSeq" id="WP_011336172.1">
    <property type="nucleotide sequence ID" value="NC_007492.2"/>
</dbReference>
<dbReference type="SMR" id="Q3K5Z2"/>
<dbReference type="GeneID" id="89625335"/>
<dbReference type="KEGG" id="pfo:Pfl01_5075"/>
<dbReference type="eggNOG" id="COG0185">
    <property type="taxonomic scope" value="Bacteria"/>
</dbReference>
<dbReference type="HOGENOM" id="CLU_144911_0_1_6"/>
<dbReference type="Proteomes" id="UP000002704">
    <property type="component" value="Chromosome"/>
</dbReference>
<dbReference type="GO" id="GO:0005737">
    <property type="term" value="C:cytoplasm"/>
    <property type="evidence" value="ECO:0007669"/>
    <property type="project" value="UniProtKB-ARBA"/>
</dbReference>
<dbReference type="GO" id="GO:0015935">
    <property type="term" value="C:small ribosomal subunit"/>
    <property type="evidence" value="ECO:0007669"/>
    <property type="project" value="InterPro"/>
</dbReference>
<dbReference type="GO" id="GO:0019843">
    <property type="term" value="F:rRNA binding"/>
    <property type="evidence" value="ECO:0007669"/>
    <property type="project" value="UniProtKB-UniRule"/>
</dbReference>
<dbReference type="GO" id="GO:0003735">
    <property type="term" value="F:structural constituent of ribosome"/>
    <property type="evidence" value="ECO:0007669"/>
    <property type="project" value="InterPro"/>
</dbReference>
<dbReference type="GO" id="GO:0000028">
    <property type="term" value="P:ribosomal small subunit assembly"/>
    <property type="evidence" value="ECO:0007669"/>
    <property type="project" value="TreeGrafter"/>
</dbReference>
<dbReference type="GO" id="GO:0006412">
    <property type="term" value="P:translation"/>
    <property type="evidence" value="ECO:0007669"/>
    <property type="project" value="UniProtKB-UniRule"/>
</dbReference>
<dbReference type="FunFam" id="3.30.860.10:FF:000001">
    <property type="entry name" value="30S ribosomal protein S19"/>
    <property type="match status" value="1"/>
</dbReference>
<dbReference type="Gene3D" id="3.30.860.10">
    <property type="entry name" value="30s Ribosomal Protein S19, Chain A"/>
    <property type="match status" value="1"/>
</dbReference>
<dbReference type="HAMAP" id="MF_00531">
    <property type="entry name" value="Ribosomal_uS19"/>
    <property type="match status" value="1"/>
</dbReference>
<dbReference type="InterPro" id="IPR002222">
    <property type="entry name" value="Ribosomal_uS19"/>
</dbReference>
<dbReference type="InterPro" id="IPR005732">
    <property type="entry name" value="Ribosomal_uS19_bac-type"/>
</dbReference>
<dbReference type="InterPro" id="IPR020934">
    <property type="entry name" value="Ribosomal_uS19_CS"/>
</dbReference>
<dbReference type="InterPro" id="IPR023575">
    <property type="entry name" value="Ribosomal_uS19_SF"/>
</dbReference>
<dbReference type="NCBIfam" id="TIGR01050">
    <property type="entry name" value="rpsS_bact"/>
    <property type="match status" value="1"/>
</dbReference>
<dbReference type="PANTHER" id="PTHR11880">
    <property type="entry name" value="RIBOSOMAL PROTEIN S19P FAMILY MEMBER"/>
    <property type="match status" value="1"/>
</dbReference>
<dbReference type="PANTHER" id="PTHR11880:SF8">
    <property type="entry name" value="SMALL RIBOSOMAL SUBUNIT PROTEIN US19M"/>
    <property type="match status" value="1"/>
</dbReference>
<dbReference type="Pfam" id="PF00203">
    <property type="entry name" value="Ribosomal_S19"/>
    <property type="match status" value="1"/>
</dbReference>
<dbReference type="PIRSF" id="PIRSF002144">
    <property type="entry name" value="Ribosomal_S19"/>
    <property type="match status" value="1"/>
</dbReference>
<dbReference type="PRINTS" id="PR00975">
    <property type="entry name" value="RIBOSOMALS19"/>
</dbReference>
<dbReference type="SUPFAM" id="SSF54570">
    <property type="entry name" value="Ribosomal protein S19"/>
    <property type="match status" value="1"/>
</dbReference>
<dbReference type="PROSITE" id="PS00323">
    <property type="entry name" value="RIBOSOMAL_S19"/>
    <property type="match status" value="1"/>
</dbReference>
<evidence type="ECO:0000255" key="1">
    <source>
        <dbReference type="HAMAP-Rule" id="MF_00531"/>
    </source>
</evidence>
<evidence type="ECO:0000305" key="2"/>
<protein>
    <recommendedName>
        <fullName evidence="1">Small ribosomal subunit protein uS19</fullName>
    </recommendedName>
    <alternativeName>
        <fullName evidence="2">30S ribosomal protein S19</fullName>
    </alternativeName>
</protein>
<feature type="chain" id="PRO_0000265403" description="Small ribosomal subunit protein uS19">
    <location>
        <begin position="1"/>
        <end position="91"/>
    </location>
</feature>
<accession>Q3K5Z2</accession>
<organism>
    <name type="scientific">Pseudomonas fluorescens (strain Pf0-1)</name>
    <dbReference type="NCBI Taxonomy" id="205922"/>
    <lineage>
        <taxon>Bacteria</taxon>
        <taxon>Pseudomonadati</taxon>
        <taxon>Pseudomonadota</taxon>
        <taxon>Gammaproteobacteria</taxon>
        <taxon>Pseudomonadales</taxon>
        <taxon>Pseudomonadaceae</taxon>
        <taxon>Pseudomonas</taxon>
    </lineage>
</organism>
<name>RS19_PSEPF</name>
<keyword id="KW-0687">Ribonucleoprotein</keyword>
<keyword id="KW-0689">Ribosomal protein</keyword>
<keyword id="KW-0694">RNA-binding</keyword>
<keyword id="KW-0699">rRNA-binding</keyword>
<comment type="function">
    <text evidence="1">Protein S19 forms a complex with S13 that binds strongly to the 16S ribosomal RNA.</text>
</comment>
<comment type="similarity">
    <text evidence="1">Belongs to the universal ribosomal protein uS19 family.</text>
</comment>
<reference key="1">
    <citation type="journal article" date="2009" name="Genome Biol.">
        <title>Genomic and genetic analyses of diversity and plant interactions of Pseudomonas fluorescens.</title>
        <authorList>
            <person name="Silby M.W."/>
            <person name="Cerdeno-Tarraga A.M."/>
            <person name="Vernikos G.S."/>
            <person name="Giddens S.R."/>
            <person name="Jackson R.W."/>
            <person name="Preston G.M."/>
            <person name="Zhang X.-X."/>
            <person name="Moon C.D."/>
            <person name="Gehrig S.M."/>
            <person name="Godfrey S.A.C."/>
            <person name="Knight C.G."/>
            <person name="Malone J.G."/>
            <person name="Robinson Z."/>
            <person name="Spiers A.J."/>
            <person name="Harris S."/>
            <person name="Challis G.L."/>
            <person name="Yaxley A.M."/>
            <person name="Harris D."/>
            <person name="Seeger K."/>
            <person name="Murphy L."/>
            <person name="Rutter S."/>
            <person name="Squares R."/>
            <person name="Quail M.A."/>
            <person name="Saunders E."/>
            <person name="Mavromatis K."/>
            <person name="Brettin T.S."/>
            <person name="Bentley S.D."/>
            <person name="Hothersall J."/>
            <person name="Stephens E."/>
            <person name="Thomas C.M."/>
            <person name="Parkhill J."/>
            <person name="Levy S.B."/>
            <person name="Rainey P.B."/>
            <person name="Thomson N.R."/>
        </authorList>
    </citation>
    <scope>NUCLEOTIDE SEQUENCE [LARGE SCALE GENOMIC DNA]</scope>
    <source>
        <strain>Pf0-1</strain>
    </source>
</reference>